<proteinExistence type="inferred from homology"/>
<organism>
    <name type="scientific">Bradyrhizobium diazoefficiens (strain JCM 10833 / BCRC 13528 / IAM 13628 / NBRC 14792 / USDA 110)</name>
    <dbReference type="NCBI Taxonomy" id="224911"/>
    <lineage>
        <taxon>Bacteria</taxon>
        <taxon>Pseudomonadati</taxon>
        <taxon>Pseudomonadota</taxon>
        <taxon>Alphaproteobacteria</taxon>
        <taxon>Hyphomicrobiales</taxon>
        <taxon>Nitrobacteraceae</taxon>
        <taxon>Bradyrhizobium</taxon>
    </lineage>
</organism>
<name>PROB_BRADU</name>
<evidence type="ECO:0000255" key="1">
    <source>
        <dbReference type="HAMAP-Rule" id="MF_00456"/>
    </source>
</evidence>
<protein>
    <recommendedName>
        <fullName evidence="1">Glutamate 5-kinase</fullName>
        <ecNumber evidence="1">2.7.2.11</ecNumber>
    </recommendedName>
    <alternativeName>
        <fullName evidence="1">Gamma-glutamyl kinase</fullName>
        <shortName evidence="1">GK</shortName>
    </alternativeName>
</protein>
<gene>
    <name evidence="1" type="primary">proB</name>
    <name type="ordered locus">blr0428</name>
</gene>
<reference key="1">
    <citation type="journal article" date="2002" name="DNA Res.">
        <title>Complete genomic sequence of nitrogen-fixing symbiotic bacterium Bradyrhizobium japonicum USDA110.</title>
        <authorList>
            <person name="Kaneko T."/>
            <person name="Nakamura Y."/>
            <person name="Sato S."/>
            <person name="Minamisawa K."/>
            <person name="Uchiumi T."/>
            <person name="Sasamoto S."/>
            <person name="Watanabe A."/>
            <person name="Idesawa K."/>
            <person name="Iriguchi M."/>
            <person name="Kawashima K."/>
            <person name="Kohara M."/>
            <person name="Matsumoto M."/>
            <person name="Shimpo S."/>
            <person name="Tsuruoka H."/>
            <person name="Wada T."/>
            <person name="Yamada M."/>
            <person name="Tabata S."/>
        </authorList>
    </citation>
    <scope>NUCLEOTIDE SEQUENCE [LARGE SCALE GENOMIC DNA]</scope>
    <source>
        <strain>JCM 10833 / BCRC 13528 / IAM 13628 / NBRC 14792 / USDA 110</strain>
    </source>
</reference>
<keyword id="KW-0028">Amino-acid biosynthesis</keyword>
<keyword id="KW-0067">ATP-binding</keyword>
<keyword id="KW-0963">Cytoplasm</keyword>
<keyword id="KW-0418">Kinase</keyword>
<keyword id="KW-0547">Nucleotide-binding</keyword>
<keyword id="KW-0641">Proline biosynthesis</keyword>
<keyword id="KW-1185">Reference proteome</keyword>
<keyword id="KW-0808">Transferase</keyword>
<feature type="chain" id="PRO_0000109650" description="Glutamate 5-kinase">
    <location>
        <begin position="1"/>
        <end position="373"/>
    </location>
</feature>
<feature type="domain" description="PUA" evidence="1">
    <location>
        <begin position="281"/>
        <end position="358"/>
    </location>
</feature>
<feature type="binding site" evidence="1">
    <location>
        <position position="15"/>
    </location>
    <ligand>
        <name>ATP</name>
        <dbReference type="ChEBI" id="CHEBI:30616"/>
    </ligand>
</feature>
<feature type="binding site" evidence="1">
    <location>
        <position position="56"/>
    </location>
    <ligand>
        <name>substrate</name>
    </ligand>
</feature>
<feature type="binding site" evidence="1">
    <location>
        <position position="143"/>
    </location>
    <ligand>
        <name>substrate</name>
    </ligand>
</feature>
<feature type="binding site" evidence="1">
    <location>
        <position position="155"/>
    </location>
    <ligand>
        <name>substrate</name>
    </ligand>
</feature>
<feature type="binding site" evidence="1">
    <location>
        <begin position="175"/>
        <end position="176"/>
    </location>
    <ligand>
        <name>ATP</name>
        <dbReference type="ChEBI" id="CHEBI:30616"/>
    </ligand>
</feature>
<dbReference type="EC" id="2.7.2.11" evidence="1"/>
<dbReference type="EMBL" id="BA000040">
    <property type="protein sequence ID" value="BAC45693.1"/>
    <property type="molecule type" value="Genomic_DNA"/>
</dbReference>
<dbReference type="RefSeq" id="NP_767068.1">
    <property type="nucleotide sequence ID" value="NC_004463.1"/>
</dbReference>
<dbReference type="RefSeq" id="WP_011083260.1">
    <property type="nucleotide sequence ID" value="NC_004463.1"/>
</dbReference>
<dbReference type="SMR" id="Q89X86"/>
<dbReference type="FunCoup" id="Q89X86">
    <property type="interactions" value="506"/>
</dbReference>
<dbReference type="STRING" id="224911.AAV28_41390"/>
<dbReference type="EnsemblBacteria" id="BAC45693">
    <property type="protein sequence ID" value="BAC45693"/>
    <property type="gene ID" value="BAC45693"/>
</dbReference>
<dbReference type="GeneID" id="46495574"/>
<dbReference type="KEGG" id="bja:blr0428"/>
<dbReference type="PATRIC" id="fig|224911.44.peg.8958"/>
<dbReference type="eggNOG" id="COG0263">
    <property type="taxonomic scope" value="Bacteria"/>
</dbReference>
<dbReference type="HOGENOM" id="CLU_025400_2_0_5"/>
<dbReference type="InParanoid" id="Q89X86"/>
<dbReference type="OrthoDB" id="9804434at2"/>
<dbReference type="PhylomeDB" id="Q89X86"/>
<dbReference type="UniPathway" id="UPA00098">
    <property type="reaction ID" value="UER00359"/>
</dbReference>
<dbReference type="Proteomes" id="UP000002526">
    <property type="component" value="Chromosome"/>
</dbReference>
<dbReference type="GO" id="GO:0005829">
    <property type="term" value="C:cytosol"/>
    <property type="evidence" value="ECO:0000318"/>
    <property type="project" value="GO_Central"/>
</dbReference>
<dbReference type="GO" id="GO:0005524">
    <property type="term" value="F:ATP binding"/>
    <property type="evidence" value="ECO:0007669"/>
    <property type="project" value="UniProtKB-KW"/>
</dbReference>
<dbReference type="GO" id="GO:0004349">
    <property type="term" value="F:glutamate 5-kinase activity"/>
    <property type="evidence" value="ECO:0000318"/>
    <property type="project" value="GO_Central"/>
</dbReference>
<dbReference type="GO" id="GO:0003723">
    <property type="term" value="F:RNA binding"/>
    <property type="evidence" value="ECO:0007669"/>
    <property type="project" value="InterPro"/>
</dbReference>
<dbReference type="GO" id="GO:0055129">
    <property type="term" value="P:L-proline biosynthetic process"/>
    <property type="evidence" value="ECO:0007669"/>
    <property type="project" value="UniProtKB-UniRule"/>
</dbReference>
<dbReference type="GO" id="GO:0006561">
    <property type="term" value="P:proline biosynthetic process"/>
    <property type="evidence" value="ECO:0000318"/>
    <property type="project" value="GO_Central"/>
</dbReference>
<dbReference type="CDD" id="cd04242">
    <property type="entry name" value="AAK_G5K_ProB"/>
    <property type="match status" value="1"/>
</dbReference>
<dbReference type="CDD" id="cd21157">
    <property type="entry name" value="PUA_G5K"/>
    <property type="match status" value="1"/>
</dbReference>
<dbReference type="FunFam" id="2.30.130.10:FF:000007">
    <property type="entry name" value="Glutamate 5-kinase"/>
    <property type="match status" value="1"/>
</dbReference>
<dbReference type="FunFam" id="3.40.1160.10:FF:000018">
    <property type="entry name" value="Glutamate 5-kinase"/>
    <property type="match status" value="1"/>
</dbReference>
<dbReference type="Gene3D" id="3.40.1160.10">
    <property type="entry name" value="Acetylglutamate kinase-like"/>
    <property type="match status" value="1"/>
</dbReference>
<dbReference type="Gene3D" id="2.30.130.10">
    <property type="entry name" value="PUA domain"/>
    <property type="match status" value="1"/>
</dbReference>
<dbReference type="HAMAP" id="MF_00456">
    <property type="entry name" value="ProB"/>
    <property type="match status" value="1"/>
</dbReference>
<dbReference type="InterPro" id="IPR036393">
    <property type="entry name" value="AceGlu_kinase-like_sf"/>
</dbReference>
<dbReference type="InterPro" id="IPR001048">
    <property type="entry name" value="Asp/Glu/Uridylate_kinase"/>
</dbReference>
<dbReference type="InterPro" id="IPR041739">
    <property type="entry name" value="G5K_ProB"/>
</dbReference>
<dbReference type="InterPro" id="IPR001057">
    <property type="entry name" value="Glu/AcGlu_kinase"/>
</dbReference>
<dbReference type="InterPro" id="IPR011529">
    <property type="entry name" value="Glu_5kinase"/>
</dbReference>
<dbReference type="InterPro" id="IPR005715">
    <property type="entry name" value="Glu_5kinase/COase_Synthase"/>
</dbReference>
<dbReference type="InterPro" id="IPR019797">
    <property type="entry name" value="Glutamate_5-kinase_CS"/>
</dbReference>
<dbReference type="InterPro" id="IPR002478">
    <property type="entry name" value="PUA"/>
</dbReference>
<dbReference type="InterPro" id="IPR015947">
    <property type="entry name" value="PUA-like_sf"/>
</dbReference>
<dbReference type="InterPro" id="IPR036974">
    <property type="entry name" value="PUA_sf"/>
</dbReference>
<dbReference type="NCBIfam" id="TIGR01027">
    <property type="entry name" value="proB"/>
    <property type="match status" value="1"/>
</dbReference>
<dbReference type="PANTHER" id="PTHR43654">
    <property type="entry name" value="GLUTAMATE 5-KINASE"/>
    <property type="match status" value="1"/>
</dbReference>
<dbReference type="PANTHER" id="PTHR43654:SF1">
    <property type="entry name" value="ISOPENTENYL PHOSPHATE KINASE"/>
    <property type="match status" value="1"/>
</dbReference>
<dbReference type="Pfam" id="PF00696">
    <property type="entry name" value="AA_kinase"/>
    <property type="match status" value="1"/>
</dbReference>
<dbReference type="Pfam" id="PF01472">
    <property type="entry name" value="PUA"/>
    <property type="match status" value="1"/>
</dbReference>
<dbReference type="PIRSF" id="PIRSF000729">
    <property type="entry name" value="GK"/>
    <property type="match status" value="1"/>
</dbReference>
<dbReference type="PRINTS" id="PR00474">
    <property type="entry name" value="GLU5KINASE"/>
</dbReference>
<dbReference type="SMART" id="SM00359">
    <property type="entry name" value="PUA"/>
    <property type="match status" value="1"/>
</dbReference>
<dbReference type="SUPFAM" id="SSF53633">
    <property type="entry name" value="Carbamate kinase-like"/>
    <property type="match status" value="1"/>
</dbReference>
<dbReference type="SUPFAM" id="SSF88697">
    <property type="entry name" value="PUA domain-like"/>
    <property type="match status" value="1"/>
</dbReference>
<dbReference type="PROSITE" id="PS00902">
    <property type="entry name" value="GLUTAMATE_5_KINASE"/>
    <property type="match status" value="1"/>
</dbReference>
<dbReference type="PROSITE" id="PS50890">
    <property type="entry name" value="PUA"/>
    <property type="match status" value="1"/>
</dbReference>
<comment type="function">
    <text evidence="1">Catalyzes the transfer of a phosphate group to glutamate to form L-glutamate 5-phosphate.</text>
</comment>
<comment type="catalytic activity">
    <reaction evidence="1">
        <text>L-glutamate + ATP = L-glutamyl 5-phosphate + ADP</text>
        <dbReference type="Rhea" id="RHEA:14877"/>
        <dbReference type="ChEBI" id="CHEBI:29985"/>
        <dbReference type="ChEBI" id="CHEBI:30616"/>
        <dbReference type="ChEBI" id="CHEBI:58274"/>
        <dbReference type="ChEBI" id="CHEBI:456216"/>
        <dbReference type="EC" id="2.7.2.11"/>
    </reaction>
</comment>
<comment type="pathway">
    <text evidence="1">Amino-acid biosynthesis; L-proline biosynthesis; L-glutamate 5-semialdehyde from L-glutamate: step 1/2.</text>
</comment>
<comment type="subcellular location">
    <subcellularLocation>
        <location evidence="1">Cytoplasm</location>
    </subcellularLocation>
</comment>
<comment type="similarity">
    <text evidence="1">Belongs to the glutamate 5-kinase family.</text>
</comment>
<sequence>MASPELSQFRRIVVKVGSALLVDSDKGEVRTSWLAALADDMAKLHKEGRDVLVVSSGSIALGRSRLKLPRGPLKLEESQAAAAVGQIALARIWSEVLGAHGIDAGQILVTLQDTEERRRYLNARSTIGKLLEWRAIPVINENDTVATTEIRYGDNDRLAARVATMASADLLVLLSDIDGLYDAPPKNNPNAKLIPVVDSISSEIEAVAGDAESELSRGGMRTKVEAAKIATTGGTHMLIASGKIEHPLQAIANGGRCTWFLTPANPITSRKRWIAGTLEPKGTLTIDAGAVTALRAGASLLPAGVIKVEGQFARGDAVIVRGPDTSEIGRGLIAYDADDAERIKGRSSPDVMTILGISGRAEMIHRDDLVVGG</sequence>
<accession>Q89X86</accession>